<feature type="chain" id="PRO_0000359737" description="CTL-like protein DDB_G0269978">
    <location>
        <begin position="1"/>
        <end position="506"/>
    </location>
</feature>
<feature type="transmembrane region" description="Helical" evidence="2">
    <location>
        <begin position="91"/>
        <end position="111"/>
    </location>
</feature>
<feature type="transmembrane region" description="Helical" evidence="2">
    <location>
        <begin position="126"/>
        <end position="146"/>
    </location>
</feature>
<feature type="transmembrane region" description="Helical" evidence="2">
    <location>
        <begin position="161"/>
        <end position="181"/>
    </location>
</feature>
<feature type="transmembrane region" description="Helical" evidence="2">
    <location>
        <begin position="182"/>
        <end position="202"/>
    </location>
</feature>
<feature type="transmembrane region" description="Helical" evidence="2">
    <location>
        <begin position="226"/>
        <end position="246"/>
    </location>
</feature>
<feature type="transmembrane region" description="Helical" evidence="2">
    <location>
        <begin position="256"/>
        <end position="276"/>
    </location>
</feature>
<feature type="transmembrane region" description="Helical" evidence="2">
    <location>
        <begin position="279"/>
        <end position="299"/>
    </location>
</feature>
<feature type="transmembrane region" description="Helical" evidence="2">
    <location>
        <begin position="323"/>
        <end position="343"/>
    </location>
</feature>
<feature type="transmembrane region" description="Helical" evidence="2">
    <location>
        <begin position="345"/>
        <end position="367"/>
    </location>
</feature>
<feature type="transmembrane region" description="Helical" evidence="2">
    <location>
        <begin position="371"/>
        <end position="393"/>
    </location>
</feature>
<feature type="transmembrane region" description="Helical" evidence="2">
    <location>
        <begin position="416"/>
        <end position="436"/>
    </location>
</feature>
<feature type="transmembrane region" description="Helical" evidence="2">
    <location>
        <begin position="447"/>
        <end position="467"/>
    </location>
</feature>
<feature type="glycosylation site" description="N-linked (GlcNAc...) asparagine" evidence="2">
    <location>
        <position position="15"/>
    </location>
</feature>
<feature type="glycosylation site" description="N-linked (GlcNAc...) asparagine" evidence="2">
    <location>
        <position position="41"/>
    </location>
</feature>
<dbReference type="EMBL" id="AAFI02000005">
    <property type="protein sequence ID" value="EAL72339.1"/>
    <property type="molecule type" value="Genomic_DNA"/>
</dbReference>
<dbReference type="RefSeq" id="XP_646443.1">
    <property type="nucleotide sequence ID" value="XM_641351.1"/>
</dbReference>
<dbReference type="SMR" id="Q55CN8"/>
<dbReference type="FunCoup" id="Q55CN8">
    <property type="interactions" value="4"/>
</dbReference>
<dbReference type="GlyGen" id="Q55CN8">
    <property type="glycosylation" value="2 sites"/>
</dbReference>
<dbReference type="PaxDb" id="44689-DDB0190711"/>
<dbReference type="EnsemblProtists" id="EAL72339">
    <property type="protein sequence ID" value="EAL72339"/>
    <property type="gene ID" value="DDB_G0269978"/>
</dbReference>
<dbReference type="GeneID" id="8617402"/>
<dbReference type="KEGG" id="ddi:DDB_G0269978"/>
<dbReference type="dictyBase" id="DDB_G0269978"/>
<dbReference type="VEuPathDB" id="AmoebaDB:DDB_G0269978"/>
<dbReference type="eggNOG" id="KOG1362">
    <property type="taxonomic scope" value="Eukaryota"/>
</dbReference>
<dbReference type="HOGENOM" id="CLU_539099_0_0_1"/>
<dbReference type="InParanoid" id="Q55CN8"/>
<dbReference type="OMA" id="FNRWAFV"/>
<dbReference type="PhylomeDB" id="Q55CN8"/>
<dbReference type="PRO" id="PR:Q55CN8"/>
<dbReference type="Proteomes" id="UP000002195">
    <property type="component" value="Chromosome 1"/>
</dbReference>
<dbReference type="GO" id="GO:0016020">
    <property type="term" value="C:membrane"/>
    <property type="evidence" value="ECO:0000318"/>
    <property type="project" value="GO_Central"/>
</dbReference>
<dbReference type="GO" id="GO:0022857">
    <property type="term" value="F:transmembrane transporter activity"/>
    <property type="evidence" value="ECO:0000318"/>
    <property type="project" value="GO_Central"/>
</dbReference>
<dbReference type="GO" id="GO:0055085">
    <property type="term" value="P:transmembrane transport"/>
    <property type="evidence" value="ECO:0000318"/>
    <property type="project" value="GO_Central"/>
</dbReference>
<dbReference type="InterPro" id="IPR007603">
    <property type="entry name" value="Choline_transptr-like"/>
</dbReference>
<dbReference type="PANTHER" id="PTHR12385">
    <property type="entry name" value="CHOLINE TRANSPORTER-LIKE (SLC FAMILY 44)"/>
    <property type="match status" value="1"/>
</dbReference>
<dbReference type="PANTHER" id="PTHR12385:SF4">
    <property type="entry name" value="PROTEIN PNS1"/>
    <property type="match status" value="1"/>
</dbReference>
<dbReference type="Pfam" id="PF04515">
    <property type="entry name" value="Choline_transpo"/>
    <property type="match status" value="1"/>
</dbReference>
<sequence>MGINDNGIYGSLKGNSTTGGIYKMGDHNTGYGEKNNQNNNNKSGGKTIVNGVIVNSNQQKLKGDENEFDHSQDDNADEFNKFPKKVKYNDLLYSVLFAIQMVLFITMTVIAGTKHPNKKEFVEYSLQGLLIIAISIPLILAFFLIWKKIFKIHPTNMIKTSFFSLMITGILFIGLLIGNGWYSWAIVFGITLISLIFFYFAFRDKIPFVGIIISLVLKIIEKYPSTLLVSFVCLIISCVYYNIWLFSVSYNFYYDSYWTAWSYMKFMFLVFNLYWTHYVITYTCYSVVSGLVASWYFFADEDFNGMPPKPCAHSLYRSMTSSFGSIAFGSLLVCLVQMVQFICRGFARVPGLTSLFCNCLQFIALIFTRMLYTFNIYTFSMVSIYGQSFCNSSKKTYNLMVNNNEKLFATHNYMLITMLSVSLSMFLIIGFIVTMIMATIQLENQGWLYVQLVMFLFILYKPFDIIFSSVLTILMCLISDPNAMEVTKPNTFILLSETYDFKSLNP</sequence>
<gene>
    <name type="ORF">DDB_G0269978</name>
</gene>
<name>CTLHC_DICDI</name>
<evidence type="ECO:0000250" key="1"/>
<evidence type="ECO:0000255" key="2"/>
<evidence type="ECO:0000305" key="3"/>
<accession>Q55CN8</accession>
<comment type="subcellular location">
    <subcellularLocation>
        <location evidence="1">Membrane</location>
        <topology evidence="1">Multi-pass membrane protein</topology>
    </subcellularLocation>
</comment>
<comment type="similarity">
    <text evidence="3">Belongs to the CTL (choline transporter-like) family.</text>
</comment>
<keyword id="KW-0325">Glycoprotein</keyword>
<keyword id="KW-0472">Membrane</keyword>
<keyword id="KW-1185">Reference proteome</keyword>
<keyword id="KW-0812">Transmembrane</keyword>
<keyword id="KW-1133">Transmembrane helix</keyword>
<proteinExistence type="inferred from homology"/>
<organism>
    <name type="scientific">Dictyostelium discoideum</name>
    <name type="common">Social amoeba</name>
    <dbReference type="NCBI Taxonomy" id="44689"/>
    <lineage>
        <taxon>Eukaryota</taxon>
        <taxon>Amoebozoa</taxon>
        <taxon>Evosea</taxon>
        <taxon>Eumycetozoa</taxon>
        <taxon>Dictyostelia</taxon>
        <taxon>Dictyosteliales</taxon>
        <taxon>Dictyosteliaceae</taxon>
        <taxon>Dictyostelium</taxon>
    </lineage>
</organism>
<protein>
    <recommendedName>
        <fullName>CTL-like protein DDB_G0269978</fullName>
    </recommendedName>
</protein>
<reference key="1">
    <citation type="journal article" date="2005" name="Nature">
        <title>The genome of the social amoeba Dictyostelium discoideum.</title>
        <authorList>
            <person name="Eichinger L."/>
            <person name="Pachebat J.A."/>
            <person name="Gloeckner G."/>
            <person name="Rajandream M.A."/>
            <person name="Sucgang R."/>
            <person name="Berriman M."/>
            <person name="Song J."/>
            <person name="Olsen R."/>
            <person name="Szafranski K."/>
            <person name="Xu Q."/>
            <person name="Tunggal B."/>
            <person name="Kummerfeld S."/>
            <person name="Madera M."/>
            <person name="Konfortov B.A."/>
            <person name="Rivero F."/>
            <person name="Bankier A.T."/>
            <person name="Lehmann R."/>
            <person name="Hamlin N."/>
            <person name="Davies R."/>
            <person name="Gaudet P."/>
            <person name="Fey P."/>
            <person name="Pilcher K."/>
            <person name="Chen G."/>
            <person name="Saunders D."/>
            <person name="Sodergren E.J."/>
            <person name="Davis P."/>
            <person name="Kerhornou A."/>
            <person name="Nie X."/>
            <person name="Hall N."/>
            <person name="Anjard C."/>
            <person name="Hemphill L."/>
            <person name="Bason N."/>
            <person name="Farbrother P."/>
            <person name="Desany B."/>
            <person name="Just E."/>
            <person name="Morio T."/>
            <person name="Rost R."/>
            <person name="Churcher C.M."/>
            <person name="Cooper J."/>
            <person name="Haydock S."/>
            <person name="van Driessche N."/>
            <person name="Cronin A."/>
            <person name="Goodhead I."/>
            <person name="Muzny D.M."/>
            <person name="Mourier T."/>
            <person name="Pain A."/>
            <person name="Lu M."/>
            <person name="Harper D."/>
            <person name="Lindsay R."/>
            <person name="Hauser H."/>
            <person name="James K.D."/>
            <person name="Quiles M."/>
            <person name="Madan Babu M."/>
            <person name="Saito T."/>
            <person name="Buchrieser C."/>
            <person name="Wardroper A."/>
            <person name="Felder M."/>
            <person name="Thangavelu M."/>
            <person name="Johnson D."/>
            <person name="Knights A."/>
            <person name="Loulseged H."/>
            <person name="Mungall K.L."/>
            <person name="Oliver K."/>
            <person name="Price C."/>
            <person name="Quail M.A."/>
            <person name="Urushihara H."/>
            <person name="Hernandez J."/>
            <person name="Rabbinowitsch E."/>
            <person name="Steffen D."/>
            <person name="Sanders M."/>
            <person name="Ma J."/>
            <person name="Kohara Y."/>
            <person name="Sharp S."/>
            <person name="Simmonds M.N."/>
            <person name="Spiegler S."/>
            <person name="Tivey A."/>
            <person name="Sugano S."/>
            <person name="White B."/>
            <person name="Walker D."/>
            <person name="Woodward J.R."/>
            <person name="Winckler T."/>
            <person name="Tanaka Y."/>
            <person name="Shaulsky G."/>
            <person name="Schleicher M."/>
            <person name="Weinstock G.M."/>
            <person name="Rosenthal A."/>
            <person name="Cox E.C."/>
            <person name="Chisholm R.L."/>
            <person name="Gibbs R.A."/>
            <person name="Loomis W.F."/>
            <person name="Platzer M."/>
            <person name="Kay R.R."/>
            <person name="Williams J.G."/>
            <person name="Dear P.H."/>
            <person name="Noegel A.A."/>
            <person name="Barrell B.G."/>
            <person name="Kuspa A."/>
        </authorList>
    </citation>
    <scope>NUCLEOTIDE SEQUENCE [LARGE SCALE GENOMIC DNA]</scope>
    <source>
        <strain>AX4</strain>
    </source>
</reference>